<protein>
    <recommendedName>
        <fullName>Glycoprotein NB</fullName>
    </recommendedName>
</protein>
<gene>
    <name type="primary">NB</name>
</gene>
<organism>
    <name type="scientific">Influenza B virus (strain B/Lee/1940)</name>
    <dbReference type="NCBI Taxonomy" id="518987"/>
    <lineage>
        <taxon>Viruses</taxon>
        <taxon>Riboviria</taxon>
        <taxon>Orthornavirae</taxon>
        <taxon>Negarnaviricota</taxon>
        <taxon>Polyploviricotina</taxon>
        <taxon>Insthoviricetes</taxon>
        <taxon>Articulavirales</taxon>
        <taxon>Orthomyxoviridae</taxon>
        <taxon>Betainfluenzavirus</taxon>
        <taxon>Betainfluenzavirus influenzae</taxon>
        <taxon>Influenza B virus</taxon>
    </lineage>
</organism>
<accession>P06817</accession>
<organismHost>
    <name type="scientific">Homo sapiens</name>
    <name type="common">Human</name>
    <dbReference type="NCBI Taxonomy" id="9606"/>
</organismHost>
<sequence>MNNATFNCTNINPITHIRGSIIITICVSLIVILIVFGCIAKIFINKNNCTNNVIRVHKRIKCPDCEPFCNKRDDISTPRAGVDIPSFILPGLNLSEGTPN</sequence>
<comment type="function">
    <text evidence="2">Putative viral proton channel. May play a role in virus entry.</text>
</comment>
<comment type="subunit">
    <text>Dimer.</text>
</comment>
<comment type="subcellular location">
    <subcellularLocation>
        <location evidence="3">Virion membrane</location>
        <topology evidence="3">Single-pass type III membrane protein</topology>
    </subcellularLocation>
</comment>
<comment type="similarity">
    <text evidence="3">Belongs to the influenza viruses type B glycoprotein NB family.</text>
</comment>
<proteinExistence type="evidence at protein level"/>
<dbReference type="EMBL" id="J02095">
    <property type="protein sequence ID" value="AAA43748.1"/>
    <property type="molecule type" value="Genomic_RNA"/>
</dbReference>
<dbReference type="PIR" id="A26026">
    <property type="entry name" value="VGIVL4"/>
</dbReference>
<dbReference type="RefSeq" id="NP_056662.1">
    <property type="nucleotide sequence ID" value="NC_002209.1"/>
</dbReference>
<dbReference type="SMR" id="P06817"/>
<dbReference type="GlyCosmos" id="P06817">
    <property type="glycosylation" value="2 sites, No reported glycans"/>
</dbReference>
<dbReference type="DNASU" id="26824003"/>
<dbReference type="GeneID" id="26824003"/>
<dbReference type="KEGG" id="vg:26824003"/>
<dbReference type="Proteomes" id="UP000008158">
    <property type="component" value="Genome"/>
</dbReference>
<dbReference type="GO" id="GO:0033644">
    <property type="term" value="C:host cell membrane"/>
    <property type="evidence" value="ECO:0007669"/>
    <property type="project" value="UniProtKB-KW"/>
</dbReference>
<dbReference type="GO" id="GO:0016020">
    <property type="term" value="C:membrane"/>
    <property type="evidence" value="ECO:0007669"/>
    <property type="project" value="UniProtKB-KW"/>
</dbReference>
<dbReference type="GO" id="GO:0055036">
    <property type="term" value="C:virion membrane"/>
    <property type="evidence" value="ECO:0007669"/>
    <property type="project" value="UniProtKB-SubCell"/>
</dbReference>
<dbReference type="GO" id="GO:0015267">
    <property type="term" value="F:channel activity"/>
    <property type="evidence" value="ECO:0007669"/>
    <property type="project" value="UniProtKB-KW"/>
</dbReference>
<dbReference type="GO" id="GO:1902600">
    <property type="term" value="P:proton transmembrane transport"/>
    <property type="evidence" value="ECO:0007669"/>
    <property type="project" value="UniProtKB-KW"/>
</dbReference>
<dbReference type="InterPro" id="IPR007288">
    <property type="entry name" value="InfluenzaB_glycoprotein_NB"/>
</dbReference>
<dbReference type="Pfam" id="PF04159">
    <property type="entry name" value="NB"/>
    <property type="match status" value="1"/>
</dbReference>
<name>VNB_INBLE</name>
<feature type="chain" id="PRO_0000078906" description="Glycoprotein NB">
    <location>
        <begin position="1"/>
        <end position="100"/>
    </location>
</feature>
<feature type="topological domain" description="Virion surface" evidence="3">
    <location>
        <begin position="1"/>
        <end position="18"/>
    </location>
</feature>
<feature type="transmembrane region" description="Helical; Signal-anchor for type III membrane protein" evidence="1">
    <location>
        <begin position="19"/>
        <end position="40"/>
    </location>
</feature>
<feature type="topological domain" description="Intravirion" evidence="3">
    <location>
        <begin position="41"/>
        <end position="100"/>
    </location>
</feature>
<feature type="glycosylation site" description="N-linked (GlcNAc...) asparagine; by host" evidence="1">
    <location>
        <position position="3"/>
    </location>
</feature>
<feature type="glycosylation site" description="N-linked (GlcNAc...) asparagine; by host" evidence="1">
    <location>
        <position position="7"/>
    </location>
</feature>
<feature type="mutagenesis site" description="Loss of gating and proton permeability." evidence="2">
    <original>S</original>
    <variation>A</variation>
    <location>
        <position position="20"/>
    </location>
</feature>
<feature type="mutagenesis site" description="No effect." evidence="2">
    <original>T</original>
    <variation>A</variation>
    <location>
        <position position="24"/>
    </location>
</feature>
<feature type="mutagenesis site" description="No effect." evidence="2">
    <original>C</original>
    <variation>A</variation>
    <location>
        <position position="26"/>
    </location>
</feature>
<feature type="mutagenesis site" description="No effect." evidence="2">
    <original>S</original>
    <variation>A</variation>
    <location>
        <position position="28"/>
    </location>
</feature>
<reference key="1">
    <citation type="journal article" date="1982" name="Proc. Natl. Acad. Sci. U.S.A.">
        <title>Complete nucleotide sequence of the neuraminidase gene of influenza B virus.</title>
        <authorList>
            <person name="Shaw M.W."/>
            <person name="Lamb R.A."/>
            <person name="Erickson B.W."/>
            <person name="Briedis D.J."/>
            <person name="Choppin P.W."/>
        </authorList>
    </citation>
    <scope>NUCLEOTIDE SEQUENCE [GENOMIC RNA]</scope>
</reference>
<reference key="2">
    <citation type="journal article" date="1983" name="Proc. Natl. Acad. Sci. U.S.A.">
        <title>A previously unrecognized influenza B virus glycoprotein from a bicistronic mRNA that also encodes the viral neuraminidase.</title>
        <authorList>
            <person name="Shaw M.W."/>
            <person name="Choppin P.W."/>
            <person name="Lamb R.A."/>
        </authorList>
    </citation>
    <scope>NUCLEOTIDE SEQUENCE [GENOMIC RNA]</scope>
</reference>
<reference key="3">
    <citation type="journal article" date="1986" name="Mol. Cell. Biol.">
        <title>Determination of the orientation of an integral membrane protein and sites of glycosylation by oligonucleotide-directed mutagenesis: influenza B virus NB glycoprotein lacks a cleavable signal sequence and has an extracellular NH2-terminal region.</title>
        <authorList>
            <person name="William M.A."/>
            <person name="Lamb R.A."/>
        </authorList>
    </citation>
    <scope>TOPOLOGY</scope>
</reference>
<reference key="4">
    <citation type="journal article" date="2004" name="J. Membr. Biol.">
        <title>An amino-acid substitution in the influenza-B NB protein affects ion-channel gating.</title>
        <authorList>
            <person name="Premkumar A."/>
            <person name="Ewart G.D."/>
            <person name="Cox G.B."/>
            <person name="Gage P.W."/>
        </authorList>
    </citation>
    <scope>FUNCTION</scope>
    <scope>MUTAGENESIS OF SER-20; THR-24; CYS-26 AND SER-28</scope>
</reference>
<reference key="5">
    <citation type="journal article" date="1996" name="J. Gen. Virol.">
        <title>The NB protein is an integral component of the membrane of influenza B virus.</title>
        <authorList>
            <person name="Betakova T."/>
            <person name="Nermut M.V."/>
            <person name="Hay A.J."/>
        </authorList>
    </citation>
    <scope>TOPOLOGY</scope>
</reference>
<keyword id="KW-0325">Glycoprotein</keyword>
<keyword id="KW-0375">Hydrogen ion transport</keyword>
<keyword id="KW-0407">Ion channel</keyword>
<keyword id="KW-0406">Ion transport</keyword>
<keyword id="KW-0472">Membrane</keyword>
<keyword id="KW-1185">Reference proteome</keyword>
<keyword id="KW-0735">Signal-anchor</keyword>
<keyword id="KW-0812">Transmembrane</keyword>
<keyword id="KW-1133">Transmembrane helix</keyword>
<keyword id="KW-0813">Transport</keyword>
<keyword id="KW-1182">Viral ion channel</keyword>
<keyword id="KW-0946">Virion</keyword>
<evidence type="ECO:0000255" key="1"/>
<evidence type="ECO:0000269" key="2">
    <source>
    </source>
</evidence>
<evidence type="ECO:0000305" key="3"/>